<feature type="initiator methionine" description="Removed" evidence="1">
    <location>
        <position position="1"/>
    </location>
</feature>
<feature type="chain" id="PRO_0000052530" description="Globin-1">
    <location>
        <begin position="2"/>
        <end position="150"/>
    </location>
</feature>
<feature type="domain" description="Globin" evidence="2">
    <location>
        <begin position="11"/>
        <end position="150"/>
    </location>
</feature>
<feature type="binding site" description="distal binding residue" evidence="2">
    <location>
        <position position="74"/>
    </location>
    <ligand>
        <name>heme b</name>
        <dbReference type="ChEBI" id="CHEBI:60344"/>
    </ligand>
    <ligandPart>
        <name>Fe</name>
        <dbReference type="ChEBI" id="CHEBI:18248"/>
    </ligandPart>
</feature>
<feature type="binding site" description="proximal binding residue" evidence="2">
    <location>
        <position position="106"/>
    </location>
    <ligand>
        <name>heme b</name>
        <dbReference type="ChEBI" id="CHEBI:60344"/>
    </ligand>
    <ligandPart>
        <name>Fe</name>
        <dbReference type="ChEBI" id="CHEBI:18248"/>
    </ligandPart>
</feature>
<dbReference type="PIR" id="S13458">
    <property type="entry name" value="S13458"/>
</dbReference>
<dbReference type="SMR" id="P21197"/>
<dbReference type="GO" id="GO:0020037">
    <property type="term" value="F:heme binding"/>
    <property type="evidence" value="ECO:0007669"/>
    <property type="project" value="InterPro"/>
</dbReference>
<dbReference type="GO" id="GO:0005506">
    <property type="term" value="F:iron ion binding"/>
    <property type="evidence" value="ECO:0007669"/>
    <property type="project" value="InterPro"/>
</dbReference>
<dbReference type="GO" id="GO:0016491">
    <property type="term" value="F:oxidoreductase activity"/>
    <property type="evidence" value="ECO:0007669"/>
    <property type="project" value="TreeGrafter"/>
</dbReference>
<dbReference type="GO" id="GO:0019825">
    <property type="term" value="F:oxygen binding"/>
    <property type="evidence" value="ECO:0007669"/>
    <property type="project" value="InterPro"/>
</dbReference>
<dbReference type="GO" id="GO:0005344">
    <property type="term" value="F:oxygen carrier activity"/>
    <property type="evidence" value="ECO:0007669"/>
    <property type="project" value="UniProtKB-KW"/>
</dbReference>
<dbReference type="Gene3D" id="1.10.490.10">
    <property type="entry name" value="Globins"/>
    <property type="match status" value="1"/>
</dbReference>
<dbReference type="InterPro" id="IPR000971">
    <property type="entry name" value="Globin"/>
</dbReference>
<dbReference type="InterPro" id="IPR009050">
    <property type="entry name" value="Globin-like_sf"/>
</dbReference>
<dbReference type="InterPro" id="IPR012292">
    <property type="entry name" value="Globin/Proto"/>
</dbReference>
<dbReference type="InterPro" id="IPR013314">
    <property type="entry name" value="Globin_lamprey/hagfish"/>
</dbReference>
<dbReference type="PANTHER" id="PTHR46783">
    <property type="entry name" value="CYTOGLOBIN"/>
    <property type="match status" value="1"/>
</dbReference>
<dbReference type="PANTHER" id="PTHR46783:SF1">
    <property type="entry name" value="CYTOGLOBIN-1-RELATED"/>
    <property type="match status" value="1"/>
</dbReference>
<dbReference type="Pfam" id="PF00042">
    <property type="entry name" value="Globin"/>
    <property type="match status" value="1"/>
</dbReference>
<dbReference type="PRINTS" id="PR01906">
    <property type="entry name" value="FISHGLOBIN"/>
</dbReference>
<dbReference type="SUPFAM" id="SSF46458">
    <property type="entry name" value="Globin-like"/>
    <property type="match status" value="1"/>
</dbReference>
<dbReference type="PROSITE" id="PS01033">
    <property type="entry name" value="GLOBIN"/>
    <property type="match status" value="1"/>
</dbReference>
<evidence type="ECO:0000250" key="1"/>
<evidence type="ECO:0000255" key="2">
    <source>
        <dbReference type="PROSITE-ProRule" id="PRU00238"/>
    </source>
</evidence>
<name>GLB1_MORMR</name>
<proteinExistence type="evidence at protein level"/>
<sequence length="150" mass="16667">MPIVDSGSVSPLSDAEKNKIRAAWDLVYKDYEKTGVDILVKFFTGTPAAQAFFPKFKGLTTADDLKQSSDVRWHAERIINAVNDAVKSMDDTEKMSMKLKELSIKHAQSFYVDRQYFKVLAGIIADTTAPGDAGFEKLMSMICILLSSAY</sequence>
<keyword id="KW-0903">Direct protein sequencing</keyword>
<keyword id="KW-0349">Heme</keyword>
<keyword id="KW-0408">Iron</keyword>
<keyword id="KW-0479">Metal-binding</keyword>
<keyword id="KW-0561">Oxygen transport</keyword>
<keyword id="KW-0813">Transport</keyword>
<organism>
    <name type="scientific">Mordacia mordax</name>
    <name type="common">Southern hemisphere lamprey</name>
    <dbReference type="NCBI Taxonomy" id="7755"/>
    <lineage>
        <taxon>Eukaryota</taxon>
        <taxon>Metazoa</taxon>
        <taxon>Chordata</taxon>
        <taxon>Craniata</taxon>
        <taxon>Vertebrata</taxon>
        <taxon>Cyclostomata</taxon>
        <taxon>Hyperoartia</taxon>
        <taxon>Petromyzontiformes</taxon>
        <taxon>Petromyzontidae</taxon>
        <taxon>Mordacia</taxon>
    </lineage>
</organism>
<protein>
    <recommendedName>
        <fullName>Globin-1</fullName>
    </recommendedName>
    <alternativeName>
        <fullName>Hemoglobin I</fullName>
    </alternativeName>
</protein>
<reference key="1">
    <citation type="journal article" date="1991" name="Biol. Chem. Hoppe-Seyler">
        <title>The primary structure of the hemoglobins of a southern hemisphere lamprey (Mordacia mordax, Cyclostomata).</title>
        <authorList>
            <person name="Hombrados I."/>
            <person name="Vidal Y."/>
            <person name="Rodewald K."/>
            <person name="Braunitzer G."/>
            <person name="Neuzil E."/>
        </authorList>
    </citation>
    <scope>PROTEIN SEQUENCE OF 2-150</scope>
</reference>
<accession>P21197</accession>
<comment type="subunit">
    <text>Monomer.</text>
</comment>
<comment type="similarity">
    <text evidence="2">Belongs to the globin family.</text>
</comment>